<reference key="1">
    <citation type="journal article" date="2008" name="Proc. Natl. Acad. Sci. U.S.A.">
        <title>The genome sequence of Bifidobacterium longum subsp. infantis reveals adaptations for milk utilization within the infant microbiome.</title>
        <authorList>
            <person name="Sela D.A."/>
            <person name="Chapman J."/>
            <person name="Adeuya A."/>
            <person name="Kim J.H."/>
            <person name="Chen F."/>
            <person name="Whitehead T.R."/>
            <person name="Lapidus A."/>
            <person name="Rokhsar D.S."/>
            <person name="Lebrilla C.B."/>
            <person name="German J.B."/>
            <person name="Price N.P."/>
            <person name="Richardson P.M."/>
            <person name="Mills D.A."/>
        </authorList>
    </citation>
    <scope>NUCLEOTIDE SEQUENCE [LARGE SCALE GENOMIC DNA]</scope>
    <source>
        <strain>ATCC 15697 / DSM 20088 / JCM 1222 / NCTC 11817 / S12</strain>
    </source>
</reference>
<reference key="2">
    <citation type="journal article" date="2011" name="Nature">
        <title>Bifidobacteria can protect from enteropathogenic infection through production of acetate.</title>
        <authorList>
            <person name="Fukuda S."/>
            <person name="Toh H."/>
            <person name="Hase K."/>
            <person name="Oshima K."/>
            <person name="Nakanishi Y."/>
            <person name="Yoshimura K."/>
            <person name="Tobe T."/>
            <person name="Clarke J.M."/>
            <person name="Topping D.L."/>
            <person name="Suzuki T."/>
            <person name="Taylor T.D."/>
            <person name="Itoh K."/>
            <person name="Kikuchi J."/>
            <person name="Morita H."/>
            <person name="Hattori M."/>
            <person name="Ohno H."/>
        </authorList>
    </citation>
    <scope>NUCLEOTIDE SEQUENCE [LARGE SCALE GENOMIC DNA]</scope>
    <source>
        <strain>ATCC 15697 / DSM 20088 / JCM 1222 / NCTC 11817 / S12</strain>
    </source>
</reference>
<comment type="function">
    <text evidence="1">One of the primary rRNA binding proteins. Required for association of the 30S and 50S subunits to form the 70S ribosome, for tRNA binding and peptide bond formation. It has been suggested to have peptidyltransferase activity; this is somewhat controversial. Makes several contacts with the 16S rRNA in the 70S ribosome.</text>
</comment>
<comment type="subunit">
    <text evidence="1">Part of the 50S ribosomal subunit. Forms a bridge to the 30S subunit in the 70S ribosome.</text>
</comment>
<comment type="similarity">
    <text evidence="1">Belongs to the universal ribosomal protein uL2 family.</text>
</comment>
<keyword id="KW-0687">Ribonucleoprotein</keyword>
<keyword id="KW-0689">Ribosomal protein</keyword>
<keyword id="KW-0694">RNA-binding</keyword>
<keyword id="KW-0699">rRNA-binding</keyword>
<feature type="chain" id="PRO_1000165724" description="Large ribosomal subunit protein uL2">
    <location>
        <begin position="1"/>
        <end position="276"/>
    </location>
</feature>
<feature type="region of interest" description="Disordered" evidence="2">
    <location>
        <begin position="14"/>
        <end position="58"/>
    </location>
</feature>
<feature type="region of interest" description="Disordered" evidence="2">
    <location>
        <begin position="221"/>
        <end position="276"/>
    </location>
</feature>
<feature type="compositionally biased region" description="Polar residues" evidence="2">
    <location>
        <begin position="16"/>
        <end position="27"/>
    </location>
</feature>
<feature type="compositionally biased region" description="Basic residues" evidence="2">
    <location>
        <begin position="255"/>
        <end position="276"/>
    </location>
</feature>
<sequence length="276" mass="30300">MAIRVYKPTTAGRRNASVSDFSELTRSTPEKSLVRKKSKTGGRNSYGRITSRHRGGGHKRQYRLIDFKRWDKDGVPAKVAEIEYDPNRSARIALLHFADGEKRYIIAPKGIKQGDVIETGAQADIKPGNNLPLKNIPTGTVVHAIELRPLGGAKIARSAGAAVQLVAKDGAYAQLRMPSGEIRNVDARCRATVGEVGNEDHANIQLGKAGRARWIGHRPITRGESMNPVDHPHGGRTRGGKPPVSPWGKGEVRTRRPKKASNKMIVRRRPSGKNRK</sequence>
<evidence type="ECO:0000255" key="1">
    <source>
        <dbReference type="HAMAP-Rule" id="MF_01320"/>
    </source>
</evidence>
<evidence type="ECO:0000256" key="2">
    <source>
        <dbReference type="SAM" id="MobiDB-lite"/>
    </source>
</evidence>
<evidence type="ECO:0000305" key="3"/>
<name>RL2_BIFLS</name>
<proteinExistence type="inferred from homology"/>
<accession>B7GND7</accession>
<accession>E8MN81</accession>
<organism>
    <name type="scientific">Bifidobacterium longum subsp. infantis (strain ATCC 15697 / DSM 20088 / JCM 1222 / NCTC 11817 / S12)</name>
    <dbReference type="NCBI Taxonomy" id="391904"/>
    <lineage>
        <taxon>Bacteria</taxon>
        <taxon>Bacillati</taxon>
        <taxon>Actinomycetota</taxon>
        <taxon>Actinomycetes</taxon>
        <taxon>Bifidobacteriales</taxon>
        <taxon>Bifidobacteriaceae</taxon>
        <taxon>Bifidobacterium</taxon>
    </lineage>
</organism>
<protein>
    <recommendedName>
        <fullName evidence="1">Large ribosomal subunit protein uL2</fullName>
    </recommendedName>
    <alternativeName>
        <fullName evidence="3">50S ribosomal protein L2</fullName>
    </alternativeName>
</protein>
<gene>
    <name evidence="1" type="primary">rplB</name>
    <name type="ordered locus">Blon_2234</name>
    <name type="ordered locus">BLIJ_2307</name>
</gene>
<dbReference type="EMBL" id="CP001095">
    <property type="protein sequence ID" value="ACJ53293.1"/>
    <property type="molecule type" value="Genomic_DNA"/>
</dbReference>
<dbReference type="EMBL" id="AP010889">
    <property type="protein sequence ID" value="BAJ69884.1"/>
    <property type="molecule type" value="Genomic_DNA"/>
</dbReference>
<dbReference type="RefSeq" id="WP_012578472.1">
    <property type="nucleotide sequence ID" value="NZ_JDTT01000039.1"/>
</dbReference>
<dbReference type="SMR" id="B7GND7"/>
<dbReference type="KEGG" id="bln:Blon_2234"/>
<dbReference type="KEGG" id="blon:BLIJ_2307"/>
<dbReference type="PATRIC" id="fig|391904.8.peg.2309"/>
<dbReference type="HOGENOM" id="CLU_036235_2_1_11"/>
<dbReference type="Proteomes" id="UP000001360">
    <property type="component" value="Chromosome"/>
</dbReference>
<dbReference type="GO" id="GO:0015934">
    <property type="term" value="C:large ribosomal subunit"/>
    <property type="evidence" value="ECO:0007669"/>
    <property type="project" value="InterPro"/>
</dbReference>
<dbReference type="GO" id="GO:0019843">
    <property type="term" value="F:rRNA binding"/>
    <property type="evidence" value="ECO:0007669"/>
    <property type="project" value="UniProtKB-UniRule"/>
</dbReference>
<dbReference type="GO" id="GO:0003735">
    <property type="term" value="F:structural constituent of ribosome"/>
    <property type="evidence" value="ECO:0007669"/>
    <property type="project" value="InterPro"/>
</dbReference>
<dbReference type="GO" id="GO:0016740">
    <property type="term" value="F:transferase activity"/>
    <property type="evidence" value="ECO:0007669"/>
    <property type="project" value="InterPro"/>
</dbReference>
<dbReference type="GO" id="GO:0002181">
    <property type="term" value="P:cytoplasmic translation"/>
    <property type="evidence" value="ECO:0007669"/>
    <property type="project" value="TreeGrafter"/>
</dbReference>
<dbReference type="FunFam" id="2.30.30.30:FF:000001">
    <property type="entry name" value="50S ribosomal protein L2"/>
    <property type="match status" value="1"/>
</dbReference>
<dbReference type="FunFam" id="2.40.50.140:FF:000003">
    <property type="entry name" value="50S ribosomal protein L2"/>
    <property type="match status" value="1"/>
</dbReference>
<dbReference type="FunFam" id="4.10.950.10:FF:000001">
    <property type="entry name" value="50S ribosomal protein L2"/>
    <property type="match status" value="1"/>
</dbReference>
<dbReference type="Gene3D" id="2.30.30.30">
    <property type="match status" value="1"/>
</dbReference>
<dbReference type="Gene3D" id="2.40.50.140">
    <property type="entry name" value="Nucleic acid-binding proteins"/>
    <property type="match status" value="1"/>
</dbReference>
<dbReference type="Gene3D" id="4.10.950.10">
    <property type="entry name" value="Ribosomal protein L2, domain 3"/>
    <property type="match status" value="1"/>
</dbReference>
<dbReference type="HAMAP" id="MF_01320_B">
    <property type="entry name" value="Ribosomal_uL2_B"/>
    <property type="match status" value="1"/>
</dbReference>
<dbReference type="InterPro" id="IPR012340">
    <property type="entry name" value="NA-bd_OB-fold"/>
</dbReference>
<dbReference type="InterPro" id="IPR014722">
    <property type="entry name" value="Rib_uL2_dom2"/>
</dbReference>
<dbReference type="InterPro" id="IPR002171">
    <property type="entry name" value="Ribosomal_uL2"/>
</dbReference>
<dbReference type="InterPro" id="IPR005880">
    <property type="entry name" value="Ribosomal_uL2_bac/org-type"/>
</dbReference>
<dbReference type="InterPro" id="IPR022669">
    <property type="entry name" value="Ribosomal_uL2_C"/>
</dbReference>
<dbReference type="InterPro" id="IPR014726">
    <property type="entry name" value="Ribosomal_uL2_dom3"/>
</dbReference>
<dbReference type="InterPro" id="IPR022666">
    <property type="entry name" value="Ribosomal_uL2_RNA-bd_dom"/>
</dbReference>
<dbReference type="InterPro" id="IPR008991">
    <property type="entry name" value="Translation_prot_SH3-like_sf"/>
</dbReference>
<dbReference type="NCBIfam" id="TIGR01171">
    <property type="entry name" value="rplB_bact"/>
    <property type="match status" value="1"/>
</dbReference>
<dbReference type="PANTHER" id="PTHR13691:SF5">
    <property type="entry name" value="LARGE RIBOSOMAL SUBUNIT PROTEIN UL2M"/>
    <property type="match status" value="1"/>
</dbReference>
<dbReference type="PANTHER" id="PTHR13691">
    <property type="entry name" value="RIBOSOMAL PROTEIN L2"/>
    <property type="match status" value="1"/>
</dbReference>
<dbReference type="Pfam" id="PF00181">
    <property type="entry name" value="Ribosomal_L2"/>
    <property type="match status" value="1"/>
</dbReference>
<dbReference type="Pfam" id="PF03947">
    <property type="entry name" value="Ribosomal_L2_C"/>
    <property type="match status" value="1"/>
</dbReference>
<dbReference type="PIRSF" id="PIRSF002158">
    <property type="entry name" value="Ribosomal_L2"/>
    <property type="match status" value="1"/>
</dbReference>
<dbReference type="SMART" id="SM01383">
    <property type="entry name" value="Ribosomal_L2"/>
    <property type="match status" value="1"/>
</dbReference>
<dbReference type="SMART" id="SM01382">
    <property type="entry name" value="Ribosomal_L2_C"/>
    <property type="match status" value="1"/>
</dbReference>
<dbReference type="SUPFAM" id="SSF50249">
    <property type="entry name" value="Nucleic acid-binding proteins"/>
    <property type="match status" value="1"/>
</dbReference>
<dbReference type="SUPFAM" id="SSF50104">
    <property type="entry name" value="Translation proteins SH3-like domain"/>
    <property type="match status" value="1"/>
</dbReference>